<organism>
    <name type="scientific">Glaesserella parasuis serovar 5 (strain SH0165)</name>
    <name type="common">Haemophilus parasuis</name>
    <dbReference type="NCBI Taxonomy" id="557723"/>
    <lineage>
        <taxon>Bacteria</taxon>
        <taxon>Pseudomonadati</taxon>
        <taxon>Pseudomonadota</taxon>
        <taxon>Gammaproteobacteria</taxon>
        <taxon>Pasteurellales</taxon>
        <taxon>Pasteurellaceae</taxon>
        <taxon>Glaesserella</taxon>
    </lineage>
</organism>
<name>RPIA_GLAP5</name>
<evidence type="ECO:0000255" key="1">
    <source>
        <dbReference type="HAMAP-Rule" id="MF_00170"/>
    </source>
</evidence>
<gene>
    <name evidence="1" type="primary">rpiA</name>
    <name type="ordered locus">HAPS_1044</name>
</gene>
<proteinExistence type="inferred from homology"/>
<accession>B8F5R1</accession>
<feature type="chain" id="PRO_1000194711" description="Ribose-5-phosphate isomerase A">
    <location>
        <begin position="1"/>
        <end position="219"/>
    </location>
</feature>
<feature type="active site" description="Proton acceptor" evidence="1">
    <location>
        <position position="103"/>
    </location>
</feature>
<feature type="binding site" evidence="1">
    <location>
        <begin position="28"/>
        <end position="31"/>
    </location>
    <ligand>
        <name>substrate</name>
    </ligand>
</feature>
<feature type="binding site" evidence="1">
    <location>
        <begin position="81"/>
        <end position="84"/>
    </location>
    <ligand>
        <name>substrate</name>
    </ligand>
</feature>
<feature type="binding site" evidence="1">
    <location>
        <begin position="94"/>
        <end position="97"/>
    </location>
    <ligand>
        <name>substrate</name>
    </ligand>
</feature>
<feature type="binding site" evidence="1">
    <location>
        <position position="121"/>
    </location>
    <ligand>
        <name>substrate</name>
    </ligand>
</feature>
<keyword id="KW-0413">Isomerase</keyword>
<keyword id="KW-1185">Reference proteome</keyword>
<dbReference type="EC" id="5.3.1.6" evidence="1"/>
<dbReference type="EMBL" id="CP001321">
    <property type="protein sequence ID" value="ACL32663.1"/>
    <property type="molecule type" value="Genomic_DNA"/>
</dbReference>
<dbReference type="RefSeq" id="WP_015939591.1">
    <property type="nucleotide sequence ID" value="NC_011852.1"/>
</dbReference>
<dbReference type="SMR" id="B8F5R1"/>
<dbReference type="STRING" id="557723.HAPS_1044"/>
<dbReference type="KEGG" id="hap:HAPS_1044"/>
<dbReference type="HOGENOM" id="CLU_056590_1_1_6"/>
<dbReference type="UniPathway" id="UPA00115">
    <property type="reaction ID" value="UER00412"/>
</dbReference>
<dbReference type="Proteomes" id="UP000006743">
    <property type="component" value="Chromosome"/>
</dbReference>
<dbReference type="GO" id="GO:0005829">
    <property type="term" value="C:cytosol"/>
    <property type="evidence" value="ECO:0007669"/>
    <property type="project" value="TreeGrafter"/>
</dbReference>
<dbReference type="GO" id="GO:0004751">
    <property type="term" value="F:ribose-5-phosphate isomerase activity"/>
    <property type="evidence" value="ECO:0007669"/>
    <property type="project" value="UniProtKB-UniRule"/>
</dbReference>
<dbReference type="GO" id="GO:0006014">
    <property type="term" value="P:D-ribose metabolic process"/>
    <property type="evidence" value="ECO:0007669"/>
    <property type="project" value="TreeGrafter"/>
</dbReference>
<dbReference type="GO" id="GO:0009052">
    <property type="term" value="P:pentose-phosphate shunt, non-oxidative branch"/>
    <property type="evidence" value="ECO:0007669"/>
    <property type="project" value="UniProtKB-UniRule"/>
</dbReference>
<dbReference type="CDD" id="cd01398">
    <property type="entry name" value="RPI_A"/>
    <property type="match status" value="1"/>
</dbReference>
<dbReference type="FunFam" id="3.30.70.260:FF:000004">
    <property type="entry name" value="Ribose-5-phosphate isomerase A"/>
    <property type="match status" value="1"/>
</dbReference>
<dbReference type="FunFam" id="3.40.50.1360:FF:000001">
    <property type="entry name" value="Ribose-5-phosphate isomerase A"/>
    <property type="match status" value="1"/>
</dbReference>
<dbReference type="Gene3D" id="3.30.70.260">
    <property type="match status" value="1"/>
</dbReference>
<dbReference type="Gene3D" id="3.40.50.1360">
    <property type="match status" value="1"/>
</dbReference>
<dbReference type="HAMAP" id="MF_00170">
    <property type="entry name" value="Rib_5P_isom_A"/>
    <property type="match status" value="1"/>
</dbReference>
<dbReference type="InterPro" id="IPR037171">
    <property type="entry name" value="NagB/RpiA_transferase-like"/>
</dbReference>
<dbReference type="InterPro" id="IPR020672">
    <property type="entry name" value="Ribose5P_isomerase_typA_subgr"/>
</dbReference>
<dbReference type="InterPro" id="IPR004788">
    <property type="entry name" value="Ribose5P_isomerase_type_A"/>
</dbReference>
<dbReference type="NCBIfam" id="NF001924">
    <property type="entry name" value="PRK00702.1"/>
    <property type="match status" value="1"/>
</dbReference>
<dbReference type="NCBIfam" id="TIGR00021">
    <property type="entry name" value="rpiA"/>
    <property type="match status" value="1"/>
</dbReference>
<dbReference type="PANTHER" id="PTHR11934">
    <property type="entry name" value="RIBOSE-5-PHOSPHATE ISOMERASE"/>
    <property type="match status" value="1"/>
</dbReference>
<dbReference type="PANTHER" id="PTHR11934:SF0">
    <property type="entry name" value="RIBOSE-5-PHOSPHATE ISOMERASE"/>
    <property type="match status" value="1"/>
</dbReference>
<dbReference type="Pfam" id="PF06026">
    <property type="entry name" value="Rib_5-P_isom_A"/>
    <property type="match status" value="1"/>
</dbReference>
<dbReference type="SUPFAM" id="SSF75445">
    <property type="entry name" value="D-ribose-5-phosphate isomerase (RpiA), lid domain"/>
    <property type="match status" value="1"/>
</dbReference>
<dbReference type="SUPFAM" id="SSF100950">
    <property type="entry name" value="NagB/RpiA/CoA transferase-like"/>
    <property type="match status" value="1"/>
</dbReference>
<comment type="function">
    <text evidence="1">Catalyzes the reversible conversion of ribose-5-phosphate to ribulose 5-phosphate.</text>
</comment>
<comment type="catalytic activity">
    <reaction evidence="1">
        <text>aldehydo-D-ribose 5-phosphate = D-ribulose 5-phosphate</text>
        <dbReference type="Rhea" id="RHEA:14657"/>
        <dbReference type="ChEBI" id="CHEBI:58121"/>
        <dbReference type="ChEBI" id="CHEBI:58273"/>
        <dbReference type="EC" id="5.3.1.6"/>
    </reaction>
</comment>
<comment type="pathway">
    <text evidence="1">Carbohydrate degradation; pentose phosphate pathway; D-ribose 5-phosphate from D-ribulose 5-phosphate (non-oxidative stage): step 1/1.</text>
</comment>
<comment type="subunit">
    <text evidence="1">Homodimer.</text>
</comment>
<comment type="similarity">
    <text evidence="1">Belongs to the ribose 5-phosphate isomerase family.</text>
</comment>
<protein>
    <recommendedName>
        <fullName evidence="1">Ribose-5-phosphate isomerase A</fullName>
        <ecNumber evidence="1">5.3.1.6</ecNumber>
    </recommendedName>
    <alternativeName>
        <fullName evidence="1">Phosphoriboisomerase A</fullName>
        <shortName evidence="1">PRI</shortName>
    </alternativeName>
</protein>
<reference key="1">
    <citation type="journal article" date="2009" name="J. Bacteriol.">
        <title>Complete genome sequence of Haemophilus parasuis SH0165.</title>
        <authorList>
            <person name="Yue M."/>
            <person name="Yang F."/>
            <person name="Yang J."/>
            <person name="Bei W."/>
            <person name="Cai X."/>
            <person name="Chen L."/>
            <person name="Dong J."/>
            <person name="Zhou R."/>
            <person name="Jin M."/>
            <person name="Jin Q."/>
            <person name="Chen H."/>
        </authorList>
    </citation>
    <scope>NUCLEOTIDE SEQUENCE [LARGE SCALE GENOMIC DNA]</scope>
    <source>
        <strain>SH0165</strain>
    </source>
</reference>
<sequence>MDQLEMKKIAARAALQYVKPDTIVGVGSGSTVNCFIDALGEMAGDIKGAVAASKASEERLRALGIEVFSANEVTELDVYIDGADEITPQGYMIKGGGAALTREKIVSSLAKKFICIVDASKQVDVLGSTFALPVEVIPMARSYVARQLVALGGSPEYRESVVTDNGNVILDVYNFKIFEPLKMEHTINNIAGVVTNGIFAQRYANVTIVGTPDGAKIIE</sequence>